<proteinExistence type="inferred from homology"/>
<comment type="similarity">
    <text evidence="1">Belongs to the bacterial ribosomal protein bL27 family.</text>
</comment>
<dbReference type="EMBL" id="CP000750">
    <property type="protein sequence ID" value="ABS04919.1"/>
    <property type="molecule type" value="Genomic_DNA"/>
</dbReference>
<dbReference type="RefSeq" id="WP_012086821.1">
    <property type="nucleotide sequence ID" value="NC_009664.2"/>
</dbReference>
<dbReference type="SMR" id="A6WDN0"/>
<dbReference type="STRING" id="266940.Krad_3456"/>
<dbReference type="KEGG" id="kra:Krad_3456"/>
<dbReference type="eggNOG" id="COG0211">
    <property type="taxonomic scope" value="Bacteria"/>
</dbReference>
<dbReference type="HOGENOM" id="CLU_095424_4_0_11"/>
<dbReference type="OrthoDB" id="9803474at2"/>
<dbReference type="Proteomes" id="UP000001116">
    <property type="component" value="Chromosome"/>
</dbReference>
<dbReference type="GO" id="GO:0022625">
    <property type="term" value="C:cytosolic large ribosomal subunit"/>
    <property type="evidence" value="ECO:0007669"/>
    <property type="project" value="TreeGrafter"/>
</dbReference>
<dbReference type="GO" id="GO:0003735">
    <property type="term" value="F:structural constituent of ribosome"/>
    <property type="evidence" value="ECO:0007669"/>
    <property type="project" value="InterPro"/>
</dbReference>
<dbReference type="GO" id="GO:0006412">
    <property type="term" value="P:translation"/>
    <property type="evidence" value="ECO:0007669"/>
    <property type="project" value="UniProtKB-UniRule"/>
</dbReference>
<dbReference type="FunFam" id="2.40.50.100:FF:000020">
    <property type="entry name" value="50S ribosomal protein L27"/>
    <property type="match status" value="1"/>
</dbReference>
<dbReference type="Gene3D" id="2.40.50.100">
    <property type="match status" value="1"/>
</dbReference>
<dbReference type="HAMAP" id="MF_00539">
    <property type="entry name" value="Ribosomal_bL27"/>
    <property type="match status" value="1"/>
</dbReference>
<dbReference type="InterPro" id="IPR001684">
    <property type="entry name" value="Ribosomal_bL27"/>
</dbReference>
<dbReference type="InterPro" id="IPR018261">
    <property type="entry name" value="Ribosomal_bL27_CS"/>
</dbReference>
<dbReference type="NCBIfam" id="TIGR00062">
    <property type="entry name" value="L27"/>
    <property type="match status" value="1"/>
</dbReference>
<dbReference type="PANTHER" id="PTHR15893:SF0">
    <property type="entry name" value="LARGE RIBOSOMAL SUBUNIT PROTEIN BL27M"/>
    <property type="match status" value="1"/>
</dbReference>
<dbReference type="PANTHER" id="PTHR15893">
    <property type="entry name" value="RIBOSOMAL PROTEIN L27"/>
    <property type="match status" value="1"/>
</dbReference>
<dbReference type="Pfam" id="PF01016">
    <property type="entry name" value="Ribosomal_L27"/>
    <property type="match status" value="1"/>
</dbReference>
<dbReference type="PRINTS" id="PR00063">
    <property type="entry name" value="RIBOSOMALL27"/>
</dbReference>
<dbReference type="SUPFAM" id="SSF110324">
    <property type="entry name" value="Ribosomal L27 protein-like"/>
    <property type="match status" value="1"/>
</dbReference>
<dbReference type="PROSITE" id="PS00831">
    <property type="entry name" value="RIBOSOMAL_L27"/>
    <property type="match status" value="1"/>
</dbReference>
<evidence type="ECO:0000255" key="1">
    <source>
        <dbReference type="HAMAP-Rule" id="MF_00539"/>
    </source>
</evidence>
<evidence type="ECO:0000256" key="2">
    <source>
        <dbReference type="SAM" id="MobiDB-lite"/>
    </source>
</evidence>
<evidence type="ECO:0000305" key="3"/>
<protein>
    <recommendedName>
        <fullName evidence="1">Large ribosomal subunit protein bL27</fullName>
    </recommendedName>
    <alternativeName>
        <fullName evidence="3">50S ribosomal protein L27</fullName>
    </alternativeName>
</protein>
<reference key="1">
    <citation type="journal article" date="2008" name="PLoS ONE">
        <title>Survival in nuclear waste, extreme resistance, and potential applications gleaned from the genome sequence of Kineococcus radiotolerans SRS30216.</title>
        <authorList>
            <person name="Bagwell C.E."/>
            <person name="Bhat S."/>
            <person name="Hawkins G.M."/>
            <person name="Smith B.W."/>
            <person name="Biswas T."/>
            <person name="Hoover T.R."/>
            <person name="Saunders E."/>
            <person name="Han C.S."/>
            <person name="Tsodikov O.V."/>
            <person name="Shimkets L.J."/>
        </authorList>
    </citation>
    <scope>NUCLEOTIDE SEQUENCE [LARGE SCALE GENOMIC DNA]</scope>
    <source>
        <strain>ATCC BAA-149 / DSM 14245 / SRS30216</strain>
    </source>
</reference>
<gene>
    <name evidence="1" type="primary">rpmA</name>
    <name type="ordered locus">Krad_3456</name>
</gene>
<feature type="chain" id="PRO_1000081894" description="Large ribosomal subunit protein bL27">
    <location>
        <begin position="1"/>
        <end position="85"/>
    </location>
</feature>
<feature type="region of interest" description="Disordered" evidence="2">
    <location>
        <begin position="1"/>
        <end position="20"/>
    </location>
</feature>
<feature type="compositionally biased region" description="Polar residues" evidence="2">
    <location>
        <begin position="7"/>
        <end position="19"/>
    </location>
</feature>
<name>RL27_KINRD</name>
<organism>
    <name type="scientific">Kineococcus radiotolerans (strain ATCC BAA-149 / DSM 14245 / SRS30216)</name>
    <dbReference type="NCBI Taxonomy" id="266940"/>
    <lineage>
        <taxon>Bacteria</taxon>
        <taxon>Bacillati</taxon>
        <taxon>Actinomycetota</taxon>
        <taxon>Actinomycetes</taxon>
        <taxon>Kineosporiales</taxon>
        <taxon>Kineosporiaceae</taxon>
        <taxon>Kineococcus</taxon>
    </lineage>
</organism>
<keyword id="KW-1185">Reference proteome</keyword>
<keyword id="KW-0687">Ribonucleoprotein</keyword>
<keyword id="KW-0689">Ribosomal protein</keyword>
<accession>A6WDN0</accession>
<sequence>MAHKKGASSSRNGRDSNAQRLGVKRFGGQVVLAGEIIVRQRGTHFHPGAGVGRGGDDTLFALVPGAVEFGTRRGRKVINIVAAGE</sequence>